<proteinExistence type="inferred from homology"/>
<reference key="1">
    <citation type="journal article" date="1994" name="Mol. Biol. Evol.">
        <title>Big flies, small repeats: the 'Thr-Gly' region of the period gene in Diptera.</title>
        <authorList>
            <person name="Nielsen J."/>
            <person name="Peixoto A.A."/>
            <person name="Piccin A."/>
            <person name="Costa R."/>
            <person name="Kyriacou C.P."/>
            <person name="Chalmers D."/>
        </authorList>
    </citation>
    <scope>NUCLEOTIDE SEQUENCE [GENOMIC DNA]</scope>
</reference>
<organism>
    <name type="scientific">Drosophila picticornis</name>
    <name type="common">Fruit fly</name>
    <name type="synonym">Idiomyia picticornis</name>
    <dbReference type="NCBI Taxonomy" id="7235"/>
    <lineage>
        <taxon>Eukaryota</taxon>
        <taxon>Metazoa</taxon>
        <taxon>Ecdysozoa</taxon>
        <taxon>Arthropoda</taxon>
        <taxon>Hexapoda</taxon>
        <taxon>Insecta</taxon>
        <taxon>Pterygota</taxon>
        <taxon>Neoptera</taxon>
        <taxon>Endopterygota</taxon>
        <taxon>Diptera</taxon>
        <taxon>Brachycera</taxon>
        <taxon>Muscomorpha</taxon>
        <taxon>Ephydroidea</taxon>
        <taxon>Drosophilidae</taxon>
        <taxon>Drosophila</taxon>
        <taxon>Hawaiian Drosophila</taxon>
    </lineage>
</organism>
<evidence type="ECO:0000250" key="1"/>
<evidence type="ECO:0000256" key="2">
    <source>
        <dbReference type="SAM" id="MobiDB-lite"/>
    </source>
</evidence>
<protein>
    <recommendedName>
        <fullName>Period circadian protein</fullName>
    </recommendedName>
</protein>
<feature type="chain" id="PRO_0000162601" description="Period circadian protein">
    <location>
        <begin position="1" status="less than"/>
        <end position="143" status="greater than"/>
    </location>
</feature>
<feature type="region of interest" description="Disordered" evidence="2">
    <location>
        <begin position="25"/>
        <end position="130"/>
    </location>
</feature>
<feature type="compositionally biased region" description="Low complexity" evidence="2">
    <location>
        <begin position="71"/>
        <end position="93"/>
    </location>
</feature>
<feature type="compositionally biased region" description="Low complexity" evidence="2">
    <location>
        <begin position="114"/>
        <end position="126"/>
    </location>
</feature>
<feature type="non-terminal residue">
    <location>
        <position position="1"/>
    </location>
</feature>
<feature type="non-terminal residue">
    <location>
        <position position="143"/>
    </location>
</feature>
<dbReference type="EMBL" id="U11810">
    <property type="protein sequence ID" value="AAA76592.1"/>
    <property type="molecule type" value="Genomic_DNA"/>
</dbReference>
<dbReference type="GO" id="GO:0005634">
    <property type="term" value="C:nucleus"/>
    <property type="evidence" value="ECO:0007669"/>
    <property type="project" value="UniProtKB-SubCell"/>
</dbReference>
<dbReference type="GO" id="GO:0048471">
    <property type="term" value="C:perinuclear region of cytoplasm"/>
    <property type="evidence" value="ECO:0007669"/>
    <property type="project" value="UniProtKB-SubCell"/>
</dbReference>
<dbReference type="GO" id="GO:0048511">
    <property type="term" value="P:rhythmic process"/>
    <property type="evidence" value="ECO:0007669"/>
    <property type="project" value="UniProtKB-KW"/>
</dbReference>
<sequence length="143" mass="14460">SKSSTETPLSYNQLNYKENLQRFFNSKPVTAPTQLDPVNRDSSYASTSREDACSAISPDHGGECSGGSGSSGNCTTNSNIRMSSFTNTSITGTGTSGCGNSGGKLSESGPVEVGGAAADAGPSLAADNSIPPISVTLTESLLN</sequence>
<name>PER_DROPI</name>
<keyword id="KW-0090">Biological rhythms</keyword>
<keyword id="KW-0963">Cytoplasm</keyword>
<keyword id="KW-0539">Nucleus</keyword>
<keyword id="KW-0597">Phosphoprotein</keyword>
<keyword id="KW-0677">Repeat</keyword>
<comment type="function">
    <text evidence="1">Essential for biological clock functions. Determines the period length of circadian and ultradian rhythms; an increase in PER dosage leads to shortened circadian rhythms and a decrease leads to lengthened circadian rhythms. Essential for the circadian rhythmicity of locomotor activity, eclosion behavior, and for the rhythmic component of the male courtship song that originates in the thoracic nervous system. The biological cycle depends on the rhythmic formation and nuclear localization of the TIM-PER complex. Light induces the degradation of TIM, which promotes elimination of PER. Nuclear activity of the heterodimer coordinatively regulates PER and TIM transcription through a negative feedback loop. Behaves as a negative element in circadian transcriptional loop. Does not appear to bind DNA, suggesting indirect transcriptional inhibition (By similarity).</text>
</comment>
<comment type="subunit">
    <text evidence="1">Forms a heterodimer with timeless (TIM); the complex then translocates into the nucleus.</text>
</comment>
<comment type="subcellular location">
    <subcellularLocation>
        <location evidence="1">Nucleus</location>
    </subcellularLocation>
    <subcellularLocation>
        <location evidence="1">Cytoplasm</location>
        <location evidence="1">Perinuclear region</location>
    </subcellularLocation>
    <text evidence="1">Nuclear at specific periods of the day. First accumulates in the perinuclear region about one hour before translocation into the nucleus. Interaction with Tim is required for nuclear localization (By similarity).</text>
</comment>
<comment type="PTM">
    <text evidence="1">Phosphorylated with a circadian rhythmicity, probably by the double-time protein (dbt). Phosphorylation could be implicated in the stability of per monomer and in the formation of heterodimer per-tim (By similarity).</text>
</comment>
<accession>Q25206</accession>
<gene>
    <name type="primary">per</name>
</gene>